<evidence type="ECO:0000250" key="1"/>
<evidence type="ECO:0000250" key="2">
    <source>
        <dbReference type="UniProtKB" id="P0A817"/>
    </source>
</evidence>
<evidence type="ECO:0000250" key="3">
    <source>
        <dbReference type="UniProtKB" id="P13444"/>
    </source>
</evidence>
<evidence type="ECO:0000250" key="4">
    <source>
        <dbReference type="UniProtKB" id="Q00266"/>
    </source>
</evidence>
<evidence type="ECO:0000250" key="5">
    <source>
        <dbReference type="UniProtKB" id="Q96551"/>
    </source>
</evidence>
<evidence type="ECO:0000305" key="6"/>
<dbReference type="EC" id="2.5.1.6" evidence="5"/>
<dbReference type="EMBL" id="EF084980">
    <property type="protein sequence ID" value="ABK24289.1"/>
    <property type="molecule type" value="mRNA"/>
</dbReference>
<dbReference type="SMR" id="A9NUH8"/>
<dbReference type="OMA" id="TVEYRMS"/>
<dbReference type="UniPathway" id="UPA00315">
    <property type="reaction ID" value="UER00080"/>
</dbReference>
<dbReference type="GO" id="GO:0005737">
    <property type="term" value="C:cytoplasm"/>
    <property type="evidence" value="ECO:0007669"/>
    <property type="project" value="UniProtKB-SubCell"/>
</dbReference>
<dbReference type="GO" id="GO:0005524">
    <property type="term" value="F:ATP binding"/>
    <property type="evidence" value="ECO:0007669"/>
    <property type="project" value="UniProtKB-KW"/>
</dbReference>
<dbReference type="GO" id="GO:0046872">
    <property type="term" value="F:metal ion binding"/>
    <property type="evidence" value="ECO:0007669"/>
    <property type="project" value="UniProtKB-KW"/>
</dbReference>
<dbReference type="GO" id="GO:0004478">
    <property type="term" value="F:methionine adenosyltransferase activity"/>
    <property type="evidence" value="ECO:0007669"/>
    <property type="project" value="UniProtKB-EC"/>
</dbReference>
<dbReference type="GO" id="GO:0006730">
    <property type="term" value="P:one-carbon metabolic process"/>
    <property type="evidence" value="ECO:0007669"/>
    <property type="project" value="UniProtKB-KW"/>
</dbReference>
<dbReference type="GO" id="GO:0006556">
    <property type="term" value="P:S-adenosylmethionine biosynthetic process"/>
    <property type="evidence" value="ECO:0007669"/>
    <property type="project" value="UniProtKB-UniPathway"/>
</dbReference>
<dbReference type="CDD" id="cd18079">
    <property type="entry name" value="S-AdoMet_synt"/>
    <property type="match status" value="1"/>
</dbReference>
<dbReference type="FunFam" id="3.30.300.10:FF:000001">
    <property type="entry name" value="S-adenosylmethionine synthase"/>
    <property type="match status" value="1"/>
</dbReference>
<dbReference type="FunFam" id="3.30.300.10:FF:000003">
    <property type="entry name" value="S-adenosylmethionine synthase"/>
    <property type="match status" value="1"/>
</dbReference>
<dbReference type="FunFam" id="3.30.300.10:FF:000004">
    <property type="entry name" value="S-adenosylmethionine synthase"/>
    <property type="match status" value="1"/>
</dbReference>
<dbReference type="Gene3D" id="3.30.300.10">
    <property type="match status" value="3"/>
</dbReference>
<dbReference type="HAMAP" id="MF_00086">
    <property type="entry name" value="S_AdoMet_synth1"/>
    <property type="match status" value="1"/>
</dbReference>
<dbReference type="InterPro" id="IPR022631">
    <property type="entry name" value="ADOMET_SYNTHASE_CS"/>
</dbReference>
<dbReference type="InterPro" id="IPR022630">
    <property type="entry name" value="S-AdoMet_synt_C"/>
</dbReference>
<dbReference type="InterPro" id="IPR022629">
    <property type="entry name" value="S-AdoMet_synt_central"/>
</dbReference>
<dbReference type="InterPro" id="IPR022628">
    <property type="entry name" value="S-AdoMet_synt_N"/>
</dbReference>
<dbReference type="InterPro" id="IPR002133">
    <property type="entry name" value="S-AdoMet_synthetase"/>
</dbReference>
<dbReference type="InterPro" id="IPR022636">
    <property type="entry name" value="S-AdoMet_synthetase_sfam"/>
</dbReference>
<dbReference type="NCBIfam" id="TIGR01034">
    <property type="entry name" value="metK"/>
    <property type="match status" value="1"/>
</dbReference>
<dbReference type="PANTHER" id="PTHR11964">
    <property type="entry name" value="S-ADENOSYLMETHIONINE SYNTHETASE"/>
    <property type="match status" value="1"/>
</dbReference>
<dbReference type="Pfam" id="PF02773">
    <property type="entry name" value="S-AdoMet_synt_C"/>
    <property type="match status" value="1"/>
</dbReference>
<dbReference type="Pfam" id="PF02772">
    <property type="entry name" value="S-AdoMet_synt_M"/>
    <property type="match status" value="1"/>
</dbReference>
<dbReference type="Pfam" id="PF00438">
    <property type="entry name" value="S-AdoMet_synt_N"/>
    <property type="match status" value="1"/>
</dbReference>
<dbReference type="PIRSF" id="PIRSF000497">
    <property type="entry name" value="MAT"/>
    <property type="match status" value="1"/>
</dbReference>
<dbReference type="SUPFAM" id="SSF55973">
    <property type="entry name" value="S-adenosylmethionine synthetase"/>
    <property type="match status" value="3"/>
</dbReference>
<dbReference type="PROSITE" id="PS00376">
    <property type="entry name" value="ADOMET_SYNTHASE_1"/>
    <property type="match status" value="1"/>
</dbReference>
<dbReference type="PROSITE" id="PS00377">
    <property type="entry name" value="ADOMET_SYNTHASE_2"/>
    <property type="match status" value="1"/>
</dbReference>
<proteinExistence type="evidence at transcript level"/>
<comment type="function">
    <text evidence="5">Catalyzes the formation of S-adenosylmethionine from methionine and ATP. The reaction comprises two steps that are both catalyzed by the same enzyme: formation of S-adenosylmethionine (AdoMet) and triphosphate, and subsequent hydrolysis of the triphosphate.</text>
</comment>
<comment type="catalytic activity">
    <reaction evidence="5">
        <text>L-methionine + ATP + H2O = S-adenosyl-L-methionine + phosphate + diphosphate</text>
        <dbReference type="Rhea" id="RHEA:21080"/>
        <dbReference type="ChEBI" id="CHEBI:15377"/>
        <dbReference type="ChEBI" id="CHEBI:30616"/>
        <dbReference type="ChEBI" id="CHEBI:33019"/>
        <dbReference type="ChEBI" id="CHEBI:43474"/>
        <dbReference type="ChEBI" id="CHEBI:57844"/>
        <dbReference type="ChEBI" id="CHEBI:59789"/>
        <dbReference type="EC" id="2.5.1.6"/>
    </reaction>
</comment>
<comment type="cofactor">
    <cofactor evidence="5">
        <name>Mn(2+)</name>
        <dbReference type="ChEBI" id="CHEBI:29035"/>
    </cofactor>
    <cofactor evidence="5">
        <name>Mg(2+)</name>
        <dbReference type="ChEBI" id="CHEBI:18420"/>
    </cofactor>
    <cofactor evidence="5">
        <name>Co(2+)</name>
        <dbReference type="ChEBI" id="CHEBI:48828"/>
    </cofactor>
    <text evidence="3 5">Binds 2 divalent ions per subunit. The metal ions interact primarily with the substrate (By similarity). Can utilize magnesium, manganese or cobalt (in vitro) (By similarity).</text>
</comment>
<comment type="cofactor">
    <cofactor evidence="5">
        <name>K(+)</name>
        <dbReference type="ChEBI" id="CHEBI:29103"/>
    </cofactor>
    <text evidence="3">Binds 1 potassium ion per subunit. The potassium ion interacts primarily with the substrate (By similarity).</text>
</comment>
<comment type="pathway">
    <text evidence="5">Amino-acid biosynthesis; S-adenosyl-L-methionine biosynthesis; S-adenosyl-L-methionine from L-methionine: step 1/1.</text>
</comment>
<comment type="subunit">
    <text evidence="1">Homotetramer.</text>
</comment>
<comment type="subcellular location">
    <subcellularLocation>
        <location evidence="1">Cytoplasm</location>
    </subcellularLocation>
</comment>
<comment type="similarity">
    <text evidence="6">Belongs to the AdoMet synthase family.</text>
</comment>
<accession>A9NUH8</accession>
<name>METK1_PICSI</name>
<reference key="1">
    <citation type="submission" date="2006-10" db="EMBL/GenBank/DDBJ databases">
        <title>The spruce transcriptome: analysis of ca. 6,500 sequence-verified full-length cDNAs.</title>
        <authorList>
            <person name="Ralph S.G."/>
            <person name="Kirkpatrick R."/>
            <person name="Chun H.J.E."/>
            <person name="Palmquist D."/>
            <person name="Wynhoven B."/>
            <person name="Kolosova N."/>
            <person name="Cooper N."/>
            <person name="Oddy C."/>
            <person name="Jancsik S."/>
            <person name="Ritland C.E."/>
            <person name="Douglas C.J."/>
            <person name="Butterfield Y.S.N."/>
            <person name="Liu J."/>
            <person name="Stott J."/>
            <person name="Yang G."/>
            <person name="Barber S."/>
            <person name="Holt R.A."/>
            <person name="Siddiqui A."/>
            <person name="Jones S.J.M."/>
            <person name="Marra M.A."/>
            <person name="Ritland K."/>
            <person name="Bohlmann J."/>
        </authorList>
    </citation>
    <scope>NUCLEOTIDE SEQUENCE [LARGE SCALE MRNA]</scope>
    <source>
        <strain>cv. FB3-425</strain>
        <tissue>Bark</tissue>
    </source>
</reference>
<organism>
    <name type="scientific">Picea sitchensis</name>
    <name type="common">Sitka spruce</name>
    <name type="synonym">Pinus sitchensis</name>
    <dbReference type="NCBI Taxonomy" id="3332"/>
    <lineage>
        <taxon>Eukaryota</taxon>
        <taxon>Viridiplantae</taxon>
        <taxon>Streptophyta</taxon>
        <taxon>Embryophyta</taxon>
        <taxon>Tracheophyta</taxon>
        <taxon>Spermatophyta</taxon>
        <taxon>Pinopsida</taxon>
        <taxon>Pinidae</taxon>
        <taxon>Conifers I</taxon>
        <taxon>Pinales</taxon>
        <taxon>Pinaceae</taxon>
        <taxon>Picea</taxon>
    </lineage>
</organism>
<gene>
    <name type="primary">METK1</name>
</gene>
<keyword id="KW-0067">ATP-binding</keyword>
<keyword id="KW-0170">Cobalt</keyword>
<keyword id="KW-0963">Cytoplasm</keyword>
<keyword id="KW-0460">Magnesium</keyword>
<keyword id="KW-0479">Metal-binding</keyword>
<keyword id="KW-0547">Nucleotide-binding</keyword>
<keyword id="KW-0554">One-carbon metabolism</keyword>
<keyword id="KW-0630">Potassium</keyword>
<keyword id="KW-0808">Transferase</keyword>
<protein>
    <recommendedName>
        <fullName>S-adenosylmethionine synthase 1</fullName>
        <shortName>AdoMet synthase 1</shortName>
        <ecNumber evidence="5">2.5.1.6</ecNumber>
    </recommendedName>
    <alternativeName>
        <fullName>Methionine adenosyltransferase 1</fullName>
        <shortName>MAT 1</shortName>
    </alternativeName>
</protein>
<sequence>MDTFLFTSESVNEGHPDKLCDQISDAILDACLEQDPESKVACETCTKTNMVMIFGEITTKANIDYEKIVRDTCRGIGFVSADVGLDADNCKVLVNIEQQSPDIAQGVHGHLTKKPEEIGAGDQGHMFGYATDETPELMPLTHVLATKLGARLTEVRKDGTCPWLRPDGKTQVTVEYKNEGGAMVPLRVHTVLISTQHDETVTNDEIAADLKEHVIKPVVPSQYLDENTIFHLNPSGRFVIGGPHGDAGLTGRKIIIDTYGGWGAHGGGAFSGKDPTKVDRSGAYIVRQAAKSVVAAGLARRCLVQVSYAIGVPEPLSVFVDTYGTGTGKIQDAEILKLIKENFDFRPGMISINLDLKRGGNMRFQKTAAYGHFGREDPDFTWETVKVLKWEKA</sequence>
<feature type="chain" id="PRO_0000363037" description="S-adenosylmethionine synthase 1">
    <location>
        <begin position="1"/>
        <end position="393"/>
    </location>
</feature>
<feature type="binding site" evidence="3">
    <location>
        <position position="9"/>
    </location>
    <ligand>
        <name>Mg(2+)</name>
        <dbReference type="ChEBI" id="CHEBI:18420"/>
    </ligand>
</feature>
<feature type="binding site" description="in other chain" evidence="4">
    <location>
        <position position="15"/>
    </location>
    <ligand>
        <name>ATP</name>
        <dbReference type="ChEBI" id="CHEBI:30616"/>
        <note>ligand shared between two neighboring subunits</note>
    </ligand>
</feature>
<feature type="binding site" evidence="2">
    <location>
        <position position="43"/>
    </location>
    <ligand>
        <name>K(+)</name>
        <dbReference type="ChEBI" id="CHEBI:29103"/>
    </ligand>
</feature>
<feature type="binding site" description="in other chain" evidence="2">
    <location>
        <position position="56"/>
    </location>
    <ligand>
        <name>L-methionine</name>
        <dbReference type="ChEBI" id="CHEBI:57844"/>
        <note>ligand shared between two neighboring subunits</note>
    </ligand>
</feature>
<feature type="binding site" description="in other chain" evidence="2">
    <location>
        <position position="99"/>
    </location>
    <ligand>
        <name>L-methionine</name>
        <dbReference type="ChEBI" id="CHEBI:57844"/>
        <note>ligand shared between two neighboring subunits</note>
    </ligand>
</feature>
<feature type="binding site" description="in other chain" evidence="4">
    <location>
        <begin position="167"/>
        <end position="169"/>
    </location>
    <ligand>
        <name>ATP</name>
        <dbReference type="ChEBI" id="CHEBI:30616"/>
        <note>ligand shared between two neighboring subunits</note>
    </ligand>
</feature>
<feature type="binding site" description="in other chain" evidence="4">
    <location>
        <begin position="235"/>
        <end position="238"/>
    </location>
    <ligand>
        <name>ATP</name>
        <dbReference type="ChEBI" id="CHEBI:30616"/>
        <note>ligand shared between two neighboring subunits</note>
    </ligand>
</feature>
<feature type="binding site" description="in other chain" evidence="4">
    <location>
        <position position="246"/>
    </location>
    <ligand>
        <name>ATP</name>
        <dbReference type="ChEBI" id="CHEBI:30616"/>
        <note>ligand shared between two neighboring subunits</note>
    </ligand>
</feature>
<feature type="binding site" evidence="2">
    <location>
        <position position="246"/>
    </location>
    <ligand>
        <name>L-methionine</name>
        <dbReference type="ChEBI" id="CHEBI:57844"/>
        <note>ligand shared between two neighboring subunits</note>
    </ligand>
</feature>
<feature type="binding site" description="in other chain" evidence="2">
    <location>
        <begin position="252"/>
        <end position="253"/>
    </location>
    <ligand>
        <name>ATP</name>
        <dbReference type="ChEBI" id="CHEBI:30616"/>
        <note>ligand shared between two neighboring subunits</note>
    </ligand>
</feature>
<feature type="binding site" evidence="2">
    <location>
        <position position="269"/>
    </location>
    <ligand>
        <name>ATP</name>
        <dbReference type="ChEBI" id="CHEBI:30616"/>
        <note>ligand shared between two neighboring subunits</note>
    </ligand>
</feature>
<feature type="binding site" evidence="2">
    <location>
        <position position="273"/>
    </location>
    <ligand>
        <name>ATP</name>
        <dbReference type="ChEBI" id="CHEBI:30616"/>
        <note>ligand shared between two neighboring subunits</note>
    </ligand>
</feature>
<feature type="binding site" evidence="3">
    <location>
        <position position="277"/>
    </location>
    <ligand>
        <name>ATP</name>
        <dbReference type="ChEBI" id="CHEBI:30616"/>
        <note>ligand shared between two neighboring subunits</note>
    </ligand>
</feature>
<feature type="binding site" description="in other chain" evidence="2">
    <location>
        <position position="277"/>
    </location>
    <ligand>
        <name>L-methionine</name>
        <dbReference type="ChEBI" id="CHEBI:57844"/>
        <note>ligand shared between two neighboring subunits</note>
    </ligand>
</feature>